<proteinExistence type="inferred from homology"/>
<keyword id="KW-0240">DNA-directed RNA polymerase</keyword>
<keyword id="KW-0548">Nucleotidyltransferase</keyword>
<keyword id="KW-1185">Reference proteome</keyword>
<keyword id="KW-0804">Transcription</keyword>
<keyword id="KW-0808">Transferase</keyword>
<feature type="chain" id="PRO_1000141699" description="DNA-directed RNA polymerase subunit beta">
    <location>
        <begin position="1"/>
        <end position="1371"/>
    </location>
</feature>
<dbReference type="EC" id="2.7.7.6" evidence="1"/>
<dbReference type="EMBL" id="CP001124">
    <property type="protein sequence ID" value="ACH37947.1"/>
    <property type="molecule type" value="Genomic_DNA"/>
</dbReference>
<dbReference type="RefSeq" id="WP_012529359.1">
    <property type="nucleotide sequence ID" value="NC_011146.1"/>
</dbReference>
<dbReference type="SMR" id="B5EFP3"/>
<dbReference type="STRING" id="404380.Gbem_0926"/>
<dbReference type="KEGG" id="gbm:Gbem_0926"/>
<dbReference type="eggNOG" id="COG0085">
    <property type="taxonomic scope" value="Bacteria"/>
</dbReference>
<dbReference type="HOGENOM" id="CLU_000524_4_0_7"/>
<dbReference type="OrthoDB" id="9803954at2"/>
<dbReference type="Proteomes" id="UP000008825">
    <property type="component" value="Chromosome"/>
</dbReference>
<dbReference type="GO" id="GO:0000428">
    <property type="term" value="C:DNA-directed RNA polymerase complex"/>
    <property type="evidence" value="ECO:0007669"/>
    <property type="project" value="UniProtKB-KW"/>
</dbReference>
<dbReference type="GO" id="GO:0003677">
    <property type="term" value="F:DNA binding"/>
    <property type="evidence" value="ECO:0007669"/>
    <property type="project" value="UniProtKB-UniRule"/>
</dbReference>
<dbReference type="GO" id="GO:0003899">
    <property type="term" value="F:DNA-directed RNA polymerase activity"/>
    <property type="evidence" value="ECO:0007669"/>
    <property type="project" value="UniProtKB-UniRule"/>
</dbReference>
<dbReference type="GO" id="GO:0032549">
    <property type="term" value="F:ribonucleoside binding"/>
    <property type="evidence" value="ECO:0007669"/>
    <property type="project" value="InterPro"/>
</dbReference>
<dbReference type="GO" id="GO:0006351">
    <property type="term" value="P:DNA-templated transcription"/>
    <property type="evidence" value="ECO:0007669"/>
    <property type="project" value="UniProtKB-UniRule"/>
</dbReference>
<dbReference type="CDD" id="cd00653">
    <property type="entry name" value="RNA_pol_B_RPB2"/>
    <property type="match status" value="1"/>
</dbReference>
<dbReference type="FunFam" id="2.40.50.100:FF:000006">
    <property type="entry name" value="DNA-directed RNA polymerase subunit beta"/>
    <property type="match status" value="1"/>
</dbReference>
<dbReference type="FunFam" id="3.90.1800.10:FF:000001">
    <property type="entry name" value="DNA-directed RNA polymerase subunit beta"/>
    <property type="match status" value="1"/>
</dbReference>
<dbReference type="Gene3D" id="2.40.50.100">
    <property type="match status" value="1"/>
</dbReference>
<dbReference type="Gene3D" id="2.40.50.150">
    <property type="match status" value="1"/>
</dbReference>
<dbReference type="Gene3D" id="3.90.1100.10">
    <property type="match status" value="2"/>
</dbReference>
<dbReference type="Gene3D" id="2.30.150.10">
    <property type="entry name" value="DNA-directed RNA polymerase, beta subunit, external 1 domain"/>
    <property type="match status" value="1"/>
</dbReference>
<dbReference type="Gene3D" id="2.40.270.10">
    <property type="entry name" value="DNA-directed RNA polymerase, subunit 2, domain 6"/>
    <property type="match status" value="1"/>
</dbReference>
<dbReference type="Gene3D" id="3.90.1800.10">
    <property type="entry name" value="RNA polymerase alpha subunit dimerisation domain"/>
    <property type="match status" value="1"/>
</dbReference>
<dbReference type="Gene3D" id="3.90.1110.10">
    <property type="entry name" value="RNA polymerase Rpb2, domain 2"/>
    <property type="match status" value="1"/>
</dbReference>
<dbReference type="HAMAP" id="MF_01321">
    <property type="entry name" value="RNApol_bact_RpoB"/>
    <property type="match status" value="1"/>
</dbReference>
<dbReference type="InterPro" id="IPR042107">
    <property type="entry name" value="DNA-dir_RNA_pol_bsu_ext_1_sf"/>
</dbReference>
<dbReference type="InterPro" id="IPR019462">
    <property type="entry name" value="DNA-dir_RNA_pol_bsu_external_1"/>
</dbReference>
<dbReference type="InterPro" id="IPR015712">
    <property type="entry name" value="DNA-dir_RNA_pol_su2"/>
</dbReference>
<dbReference type="InterPro" id="IPR007120">
    <property type="entry name" value="DNA-dir_RNAP_su2_dom"/>
</dbReference>
<dbReference type="InterPro" id="IPR037033">
    <property type="entry name" value="DNA-dir_RNAP_su2_hyb_sf"/>
</dbReference>
<dbReference type="InterPro" id="IPR010243">
    <property type="entry name" value="RNA_pol_bsu_bac"/>
</dbReference>
<dbReference type="InterPro" id="IPR007121">
    <property type="entry name" value="RNA_pol_bsu_CS"/>
</dbReference>
<dbReference type="InterPro" id="IPR007644">
    <property type="entry name" value="RNA_pol_bsu_protrusion"/>
</dbReference>
<dbReference type="InterPro" id="IPR007642">
    <property type="entry name" value="RNA_pol_Rpb2_2"/>
</dbReference>
<dbReference type="InterPro" id="IPR037034">
    <property type="entry name" value="RNA_pol_Rpb2_2_sf"/>
</dbReference>
<dbReference type="InterPro" id="IPR007645">
    <property type="entry name" value="RNA_pol_Rpb2_3"/>
</dbReference>
<dbReference type="InterPro" id="IPR007641">
    <property type="entry name" value="RNA_pol_Rpb2_7"/>
</dbReference>
<dbReference type="InterPro" id="IPR014724">
    <property type="entry name" value="RNA_pol_RPB2_OB-fold"/>
</dbReference>
<dbReference type="NCBIfam" id="NF001616">
    <property type="entry name" value="PRK00405.1"/>
    <property type="match status" value="1"/>
</dbReference>
<dbReference type="NCBIfam" id="TIGR02013">
    <property type="entry name" value="rpoB"/>
    <property type="match status" value="1"/>
</dbReference>
<dbReference type="PANTHER" id="PTHR20856">
    <property type="entry name" value="DNA-DIRECTED RNA POLYMERASE I SUBUNIT 2"/>
    <property type="match status" value="1"/>
</dbReference>
<dbReference type="Pfam" id="PF04563">
    <property type="entry name" value="RNA_pol_Rpb2_1"/>
    <property type="match status" value="1"/>
</dbReference>
<dbReference type="Pfam" id="PF04561">
    <property type="entry name" value="RNA_pol_Rpb2_2"/>
    <property type="match status" value="2"/>
</dbReference>
<dbReference type="Pfam" id="PF04565">
    <property type="entry name" value="RNA_pol_Rpb2_3"/>
    <property type="match status" value="1"/>
</dbReference>
<dbReference type="Pfam" id="PF10385">
    <property type="entry name" value="RNA_pol_Rpb2_45"/>
    <property type="match status" value="1"/>
</dbReference>
<dbReference type="Pfam" id="PF00562">
    <property type="entry name" value="RNA_pol_Rpb2_6"/>
    <property type="match status" value="1"/>
</dbReference>
<dbReference type="Pfam" id="PF04560">
    <property type="entry name" value="RNA_pol_Rpb2_7"/>
    <property type="match status" value="1"/>
</dbReference>
<dbReference type="SUPFAM" id="SSF64484">
    <property type="entry name" value="beta and beta-prime subunits of DNA dependent RNA-polymerase"/>
    <property type="match status" value="1"/>
</dbReference>
<dbReference type="PROSITE" id="PS01166">
    <property type="entry name" value="RNA_POL_BETA"/>
    <property type="match status" value="1"/>
</dbReference>
<gene>
    <name evidence="1" type="primary">rpoB</name>
    <name type="ordered locus">Gbem_0926</name>
</gene>
<sequence>MAYSIANNPLLRKNFAKIHKIIDIPNLIDIQKNSYKRFLQLDTPVDARKNSGLEAVFRSVFPIRDFSDTASLEYVSYSLGAPKYDVEECHQRGMTFAAPMKVKVRLVVWDVAKDPGTRSIRDIKEQEVYFGEIPLMTDNGTFIINGTERVIVSQLHRSPGVFYDHDKGKTHSSGKVLYSARVIPYRGSWLDFEFDHKDILYVRIDRRRKMPATVLLKALGYSNDALINYFYKSEEVKLGDNGAMTKLADAELLSNQKATADIVDPATGEVILKANRKFTKAALRKMAEHGIKEIPISEEEVVAKVASHDIYDPATGEIIVECNEELTQAKLEEIIQKGITTFQVLFIDNLHVTSSFRDTILIDKIGSTDEALIEIYRRLRPGDPPTLKSALVLFENLFFNAERYDLSAVGRLKLNYKLGVDVPLDCMTLTREDILEVVRYLIELKNGKGNIDDIDHLGNRRVRAVGELLENQYRIGLVRMERAIKERMSLQEVENLMPHDLINSKPVSAVVKEFFGSSQLSQFMDQTNPLSEVTHKRRLSALGPGGLTRERAGFEVRDVHPTHYGRVCPIETPEGPNIGLIASLSTYARINEHGFVETPYRVVSEGKVTDEVRFFSALEEEGHAIAQANAEIDKDGRFAADYISARKSGEFVLVGRDELELMDVAPMQLVSVAASLIPFLENDDANRALMGSNMQRQAVPLLRADSPLVGTGMERVVARDSGVSSVARHNGVVESVDASRIVVKIDEDQYDATGTGVDIYNLIKFARSNQNTCINQRPVVKVGDHVKAGDIIADGPSTDMGELALGQNVLIAFMPWGGYNYEDSILISERLVKDDRYTSIHIEEFEAVARDTKLGKEEITSDIPNLGEETLKDLDESGIIRIGAEVRPGDILVGKITPKGETQLSPEEKLLRAIFGEKAGDVRDTSLRVPPGVEGTVIGAKIFSRKGADKDARTEIIEKAEEMRLRKDEQDEIRIIRDSAIGKLKKLLVGKAAAVKIEGSDGKVLIPKGAAITEEMLKSFSMDRWDEISIADDDTIDEKVAQTLSTLNQQIDIIKYVFDDKVQKLRRGDDLPPGVIKMVKVYIAIKRKLQVGDKMAGRHGNKGVVSRILPEEDMPYMEDGRPVEIVLNPLGVPSRMNVGQILEMHLGWGAKGLGWKIEEFLEKNAPHDEIKRFLKGAYDNPEMDRFLDTLEGEELLNLARRLKRGIPMSSPVFEGASEESIQSMLTHAGFSTTGQVTLYDGKSGDKFMHQVTVGIMYFLKLHHLVDDKIHARSIGPYSLVTQQPLGGKARFGGQRLGEMEVWAMEAYGAAYALQEFLTVKSDDVAGRTRMYEAIVKGKHTLEPGLPESFNVLIKELQSLGLDVELLEGDED</sequence>
<comment type="function">
    <text evidence="1">DNA-dependent RNA polymerase catalyzes the transcription of DNA into RNA using the four ribonucleoside triphosphates as substrates.</text>
</comment>
<comment type="catalytic activity">
    <reaction evidence="1">
        <text>RNA(n) + a ribonucleoside 5'-triphosphate = RNA(n+1) + diphosphate</text>
        <dbReference type="Rhea" id="RHEA:21248"/>
        <dbReference type="Rhea" id="RHEA-COMP:14527"/>
        <dbReference type="Rhea" id="RHEA-COMP:17342"/>
        <dbReference type="ChEBI" id="CHEBI:33019"/>
        <dbReference type="ChEBI" id="CHEBI:61557"/>
        <dbReference type="ChEBI" id="CHEBI:140395"/>
        <dbReference type="EC" id="2.7.7.6"/>
    </reaction>
</comment>
<comment type="subunit">
    <text evidence="1">The RNAP catalytic core consists of 2 alpha, 1 beta, 1 beta' and 1 omega subunit. When a sigma factor is associated with the core the holoenzyme is formed, which can initiate transcription.</text>
</comment>
<comment type="similarity">
    <text evidence="1">Belongs to the RNA polymerase beta chain family.</text>
</comment>
<name>RPOB_CITBB</name>
<organism>
    <name type="scientific">Citrifermentans bemidjiense (strain ATCC BAA-1014 / DSM 16622 / JCM 12645 / Bem)</name>
    <name type="common">Geobacter bemidjiensis</name>
    <dbReference type="NCBI Taxonomy" id="404380"/>
    <lineage>
        <taxon>Bacteria</taxon>
        <taxon>Pseudomonadati</taxon>
        <taxon>Thermodesulfobacteriota</taxon>
        <taxon>Desulfuromonadia</taxon>
        <taxon>Geobacterales</taxon>
        <taxon>Geobacteraceae</taxon>
        <taxon>Citrifermentans</taxon>
    </lineage>
</organism>
<accession>B5EFP3</accession>
<protein>
    <recommendedName>
        <fullName evidence="1">DNA-directed RNA polymerase subunit beta</fullName>
        <shortName evidence="1">RNAP subunit beta</shortName>
        <ecNumber evidence="1">2.7.7.6</ecNumber>
    </recommendedName>
    <alternativeName>
        <fullName evidence="1">RNA polymerase subunit beta</fullName>
    </alternativeName>
    <alternativeName>
        <fullName evidence="1">Transcriptase subunit beta</fullName>
    </alternativeName>
</protein>
<reference key="1">
    <citation type="submission" date="2008-07" db="EMBL/GenBank/DDBJ databases">
        <title>Complete sequence of Geobacter bemidjiensis BEM.</title>
        <authorList>
            <consortium name="US DOE Joint Genome Institute"/>
            <person name="Lucas S."/>
            <person name="Copeland A."/>
            <person name="Lapidus A."/>
            <person name="Glavina del Rio T."/>
            <person name="Dalin E."/>
            <person name="Tice H."/>
            <person name="Bruce D."/>
            <person name="Goodwin L."/>
            <person name="Pitluck S."/>
            <person name="Kiss H."/>
            <person name="Brettin T."/>
            <person name="Detter J.C."/>
            <person name="Han C."/>
            <person name="Kuske C.R."/>
            <person name="Schmutz J."/>
            <person name="Larimer F."/>
            <person name="Land M."/>
            <person name="Hauser L."/>
            <person name="Kyrpides N."/>
            <person name="Lykidis A."/>
            <person name="Lovley D."/>
            <person name="Richardson P."/>
        </authorList>
    </citation>
    <scope>NUCLEOTIDE SEQUENCE [LARGE SCALE GENOMIC DNA]</scope>
    <source>
        <strain>ATCC BAA-1014 / DSM 16622 / JCM 12645 / Bem</strain>
    </source>
</reference>
<evidence type="ECO:0000255" key="1">
    <source>
        <dbReference type="HAMAP-Rule" id="MF_01321"/>
    </source>
</evidence>